<evidence type="ECO:0000255" key="1">
    <source>
        <dbReference type="HAMAP-Rule" id="MF_01398"/>
    </source>
</evidence>
<reference key="1">
    <citation type="journal article" date="1995" name="J. Mol. Biol.">
        <title>Complete sequence of the maize chloroplast genome: gene content, hotspots of divergence and fine tuning of genetic information by transcript editing.</title>
        <authorList>
            <person name="Maier R.M."/>
            <person name="Neckermann K."/>
            <person name="Igloi G.L."/>
            <person name="Koessel H."/>
        </authorList>
    </citation>
    <scope>NUCLEOTIDE SEQUENCE [LARGE SCALE GENOMIC DNA]</scope>
    <source>
        <strain>cv. B73</strain>
    </source>
</reference>
<organism>
    <name type="scientific">Zea mays</name>
    <name type="common">Maize</name>
    <dbReference type="NCBI Taxonomy" id="4577"/>
    <lineage>
        <taxon>Eukaryota</taxon>
        <taxon>Viridiplantae</taxon>
        <taxon>Streptophyta</taxon>
        <taxon>Embryophyta</taxon>
        <taxon>Tracheophyta</taxon>
        <taxon>Spermatophyta</taxon>
        <taxon>Magnoliopsida</taxon>
        <taxon>Liliopsida</taxon>
        <taxon>Poales</taxon>
        <taxon>Poaceae</taxon>
        <taxon>PACMAD clade</taxon>
        <taxon>Panicoideae</taxon>
        <taxon>Andropogonodae</taxon>
        <taxon>Andropogoneae</taxon>
        <taxon>Tripsacinae</taxon>
        <taxon>Zea</taxon>
    </lineage>
</organism>
<keyword id="KW-0066">ATP synthesis</keyword>
<keyword id="KW-0067">ATP-binding</keyword>
<keyword id="KW-0138">CF(0)</keyword>
<keyword id="KW-0150">Chloroplast</keyword>
<keyword id="KW-0375">Hydrogen ion transport</keyword>
<keyword id="KW-0406">Ion transport</keyword>
<keyword id="KW-0472">Membrane</keyword>
<keyword id="KW-0547">Nucleotide-binding</keyword>
<keyword id="KW-0934">Plastid</keyword>
<keyword id="KW-1185">Reference proteome</keyword>
<keyword id="KW-0793">Thylakoid</keyword>
<keyword id="KW-0812">Transmembrane</keyword>
<keyword id="KW-1133">Transmembrane helix</keyword>
<keyword id="KW-0813">Transport</keyword>
<comment type="function">
    <text evidence="1">F(1)F(0) ATP synthase produces ATP from ADP in the presence of a proton or sodium gradient. F-type ATPases consist of two structural domains, F(1) containing the extramembraneous catalytic core and F(0) containing the membrane proton channel, linked together by a central stalk and a peripheral stalk. During catalysis, ATP synthesis in the catalytic domain of F(1) is coupled via a rotary mechanism of the central stalk subunits to proton translocation.</text>
</comment>
<comment type="function">
    <text evidence="1">Component of the F(0) channel, it forms part of the peripheral stalk, linking F(1) to F(0).</text>
</comment>
<comment type="subunit">
    <text evidence="1">F-type ATPases have 2 components, F(1) - the catalytic core - and F(0) - the membrane proton channel. F(1) has five subunits: alpha(3), beta(3), gamma(1), delta(1), epsilon(1). F(0) has four main subunits: a(1), b(1), b'(1) and c(10-14). The alpha and beta chains form an alternating ring which encloses part of the gamma chain. F(1) is attached to F(0) by a central stalk formed by the gamma and epsilon chains, while a peripheral stalk is formed by the delta, b and b' chains.</text>
</comment>
<comment type="subcellular location">
    <subcellularLocation>
        <location evidence="1">Plastid</location>
        <location evidence="1">Chloroplast thylakoid membrane</location>
        <topology evidence="1">Single-pass membrane protein</topology>
    </subcellularLocation>
</comment>
<comment type="miscellaneous">
    <text>In plastids the F-type ATPase is also known as CF(1)CF(0).</text>
</comment>
<comment type="similarity">
    <text evidence="1">Belongs to the ATPase B chain family.</text>
</comment>
<sequence>MKNVTHSFVFLAHWPFAGSFGLNTDILATNLINLTVVVGVLIFFGKGVLKDLLDNRKQRILSTIRNSEELRKGTLEQLEKARIRLQKVELEADEYRMNGYSEIEREKENLINATSISLEQLEKSKNETLYFEKQRAMNQVRQQGFQQAVQGALGTLNSCLNTELHFRTIRANIGILGAIEWKR</sequence>
<name>ATPF_MAIZE</name>
<dbReference type="EMBL" id="X86563">
    <property type="protein sequence ID" value="CAA60282.1"/>
    <property type="molecule type" value="Genomic_DNA"/>
</dbReference>
<dbReference type="PIR" id="S58548">
    <property type="entry name" value="S58548"/>
</dbReference>
<dbReference type="RefSeq" id="NP_043021.1">
    <property type="nucleotide sequence ID" value="NC_001666.2"/>
</dbReference>
<dbReference type="SMR" id="P48186"/>
<dbReference type="FunCoup" id="P48186">
    <property type="interactions" value="460"/>
</dbReference>
<dbReference type="STRING" id="4577.P48186"/>
<dbReference type="GeneID" id="845172"/>
<dbReference type="KEGG" id="zma:845172"/>
<dbReference type="MaizeGDB" id="106206"/>
<dbReference type="InParanoid" id="P48186"/>
<dbReference type="OrthoDB" id="1924782at2759"/>
<dbReference type="Proteomes" id="UP000007305">
    <property type="component" value="Chloroplast"/>
</dbReference>
<dbReference type="GO" id="GO:0009535">
    <property type="term" value="C:chloroplast thylakoid membrane"/>
    <property type="evidence" value="ECO:0007669"/>
    <property type="project" value="UniProtKB-SubCell"/>
</dbReference>
<dbReference type="GO" id="GO:0045259">
    <property type="term" value="C:proton-transporting ATP synthase complex"/>
    <property type="evidence" value="ECO:0007669"/>
    <property type="project" value="UniProtKB-KW"/>
</dbReference>
<dbReference type="GO" id="GO:0005524">
    <property type="term" value="F:ATP binding"/>
    <property type="evidence" value="ECO:0007669"/>
    <property type="project" value="UniProtKB-KW"/>
</dbReference>
<dbReference type="GO" id="GO:0046933">
    <property type="term" value="F:proton-transporting ATP synthase activity, rotational mechanism"/>
    <property type="evidence" value="ECO:0007669"/>
    <property type="project" value="UniProtKB-UniRule"/>
</dbReference>
<dbReference type="CDD" id="cd06503">
    <property type="entry name" value="ATP-synt_Fo_b"/>
    <property type="match status" value="1"/>
</dbReference>
<dbReference type="HAMAP" id="MF_01398">
    <property type="entry name" value="ATP_synth_b_bprime"/>
    <property type="match status" value="1"/>
</dbReference>
<dbReference type="InterPro" id="IPR002146">
    <property type="entry name" value="ATP_synth_b/b'su_bac/chlpt"/>
</dbReference>
<dbReference type="PANTHER" id="PTHR34264">
    <property type="entry name" value="ATP SYNTHASE SUBUNIT B, CHLOROPLASTIC"/>
    <property type="match status" value="1"/>
</dbReference>
<dbReference type="PANTHER" id="PTHR34264:SF8">
    <property type="entry name" value="ATP SYNTHASE SUBUNIT B, CHLOROPLASTIC"/>
    <property type="match status" value="1"/>
</dbReference>
<dbReference type="Pfam" id="PF00430">
    <property type="entry name" value="ATP-synt_B"/>
    <property type="match status" value="1"/>
</dbReference>
<protein>
    <recommendedName>
        <fullName evidence="1">ATP synthase subunit b, chloroplastic</fullName>
    </recommendedName>
    <alternativeName>
        <fullName evidence="1">ATP synthase F(0) sector subunit b</fullName>
    </alternativeName>
    <alternativeName>
        <fullName evidence="1">ATPase subunit I</fullName>
    </alternativeName>
</protein>
<accession>P48186</accession>
<gene>
    <name evidence="1" type="primary">atpF</name>
</gene>
<geneLocation type="chloroplast"/>
<feature type="chain" id="PRO_0000082411" description="ATP synthase subunit b, chloroplastic">
    <location>
        <begin position="1"/>
        <end position="183"/>
    </location>
</feature>
<feature type="transmembrane region" description="Helical" evidence="1">
    <location>
        <begin position="25"/>
        <end position="45"/>
    </location>
</feature>
<proteinExistence type="inferred from homology"/>